<comment type="function">
    <text evidence="1">Hydrolyzes cytidine or uridine to ribose and cytosine or uracil, respectively. Has a clear preference for cytidine over uridine. Strictly specific for ribonucleosides.</text>
</comment>
<comment type="catalytic activity">
    <reaction evidence="1">
        <text>a pyrimidine ribonucleoside + H2O = a pyrimidine nucleobase + D-ribose</text>
        <dbReference type="Rhea" id="RHEA:56816"/>
        <dbReference type="ChEBI" id="CHEBI:15377"/>
        <dbReference type="ChEBI" id="CHEBI:26432"/>
        <dbReference type="ChEBI" id="CHEBI:47013"/>
        <dbReference type="ChEBI" id="CHEBI:141014"/>
        <dbReference type="EC" id="3.2.2.8"/>
    </reaction>
</comment>
<comment type="cofactor">
    <cofactor evidence="1">
        <name>Ca(2+)</name>
        <dbReference type="ChEBI" id="CHEBI:29108"/>
    </cofactor>
    <text evidence="1">Binds 1 Ca(2+) ion per monomer.</text>
</comment>
<comment type="subunit">
    <text evidence="1">Homotetramer.</text>
</comment>
<comment type="similarity">
    <text evidence="1">Belongs to the IUNH family. RihB subfamily.</text>
</comment>
<dbReference type="EC" id="3.2.2.8" evidence="1"/>
<dbReference type="EMBL" id="CP000946">
    <property type="protein sequence ID" value="ACA77149.1"/>
    <property type="molecule type" value="Genomic_DNA"/>
</dbReference>
<dbReference type="RefSeq" id="WP_000415446.1">
    <property type="nucleotide sequence ID" value="NZ_MTFT01000031.1"/>
</dbReference>
<dbReference type="SMR" id="B1IYA8"/>
<dbReference type="GeneID" id="75172290"/>
<dbReference type="KEGG" id="ecl:EcolC_1486"/>
<dbReference type="HOGENOM" id="CLU_036838_2_0_6"/>
<dbReference type="GO" id="GO:0005829">
    <property type="term" value="C:cytosol"/>
    <property type="evidence" value="ECO:0007669"/>
    <property type="project" value="TreeGrafter"/>
</dbReference>
<dbReference type="GO" id="GO:0005509">
    <property type="term" value="F:calcium ion binding"/>
    <property type="evidence" value="ECO:0007669"/>
    <property type="project" value="UniProtKB-UniRule"/>
</dbReference>
<dbReference type="GO" id="GO:0008477">
    <property type="term" value="F:purine nucleosidase activity"/>
    <property type="evidence" value="ECO:0007669"/>
    <property type="project" value="TreeGrafter"/>
</dbReference>
<dbReference type="GO" id="GO:0045437">
    <property type="term" value="F:uridine nucleosidase activity"/>
    <property type="evidence" value="ECO:0007669"/>
    <property type="project" value="UniProtKB-ARBA"/>
</dbReference>
<dbReference type="GO" id="GO:0006152">
    <property type="term" value="P:purine nucleoside catabolic process"/>
    <property type="evidence" value="ECO:0007669"/>
    <property type="project" value="TreeGrafter"/>
</dbReference>
<dbReference type="GO" id="GO:0006206">
    <property type="term" value="P:pyrimidine nucleobase metabolic process"/>
    <property type="evidence" value="ECO:0007669"/>
    <property type="project" value="UniProtKB-UniRule"/>
</dbReference>
<dbReference type="GO" id="GO:0046133">
    <property type="term" value="P:pyrimidine ribonucleoside catabolic process"/>
    <property type="evidence" value="ECO:0007669"/>
    <property type="project" value="InterPro"/>
</dbReference>
<dbReference type="CDD" id="cd02651">
    <property type="entry name" value="nuc_hydro_IU_UC_XIUA"/>
    <property type="match status" value="1"/>
</dbReference>
<dbReference type="FunFam" id="3.90.245.10:FF:000003">
    <property type="entry name" value="Pyrimidine-specific ribonucleoside hydrolase RihB"/>
    <property type="match status" value="1"/>
</dbReference>
<dbReference type="Gene3D" id="3.90.245.10">
    <property type="entry name" value="Ribonucleoside hydrolase-like"/>
    <property type="match status" value="1"/>
</dbReference>
<dbReference type="HAMAP" id="MF_01433">
    <property type="entry name" value="Pyrim_hydro_RihB"/>
    <property type="match status" value="1"/>
</dbReference>
<dbReference type="InterPro" id="IPR015910">
    <property type="entry name" value="I/U_nuclsd_hydro_CS"/>
</dbReference>
<dbReference type="InterPro" id="IPR001910">
    <property type="entry name" value="Inosine/uridine_hydrolase_dom"/>
</dbReference>
<dbReference type="InterPro" id="IPR023186">
    <property type="entry name" value="IUNH"/>
</dbReference>
<dbReference type="InterPro" id="IPR022977">
    <property type="entry name" value="Pyrim_hydro_RihB"/>
</dbReference>
<dbReference type="InterPro" id="IPR036452">
    <property type="entry name" value="Ribo_hydro-like"/>
</dbReference>
<dbReference type="NCBIfam" id="NF007417">
    <property type="entry name" value="PRK09955.1"/>
    <property type="match status" value="1"/>
</dbReference>
<dbReference type="PANTHER" id="PTHR12304">
    <property type="entry name" value="INOSINE-URIDINE PREFERRING NUCLEOSIDE HYDROLASE"/>
    <property type="match status" value="1"/>
</dbReference>
<dbReference type="PANTHER" id="PTHR12304:SF4">
    <property type="entry name" value="URIDINE NUCLEOSIDASE"/>
    <property type="match status" value="1"/>
</dbReference>
<dbReference type="Pfam" id="PF01156">
    <property type="entry name" value="IU_nuc_hydro"/>
    <property type="match status" value="1"/>
</dbReference>
<dbReference type="SUPFAM" id="SSF53590">
    <property type="entry name" value="Nucleoside hydrolase"/>
    <property type="match status" value="1"/>
</dbReference>
<dbReference type="PROSITE" id="PS01247">
    <property type="entry name" value="IUNH"/>
    <property type="match status" value="1"/>
</dbReference>
<feature type="chain" id="PRO_1000087438" description="Pyrimidine-specific ribonucleoside hydrolase RihB">
    <location>
        <begin position="1"/>
        <end position="313"/>
    </location>
</feature>
<feature type="active site" description="Proton acceptor" evidence="1">
    <location>
        <position position="11"/>
    </location>
</feature>
<feature type="binding site" evidence="1">
    <location>
        <position position="11"/>
    </location>
    <ligand>
        <name>Ca(2+)</name>
        <dbReference type="ChEBI" id="CHEBI:29108"/>
    </ligand>
</feature>
<feature type="binding site" evidence="1">
    <location>
        <position position="16"/>
    </location>
    <ligand>
        <name>Ca(2+)</name>
        <dbReference type="ChEBI" id="CHEBI:29108"/>
    </ligand>
</feature>
<feature type="binding site" evidence="1">
    <location>
        <position position="124"/>
    </location>
    <ligand>
        <name>Ca(2+)</name>
        <dbReference type="ChEBI" id="CHEBI:29108"/>
    </ligand>
</feature>
<feature type="binding site" evidence="1">
    <location>
        <position position="227"/>
    </location>
    <ligand>
        <name>substrate</name>
    </ligand>
</feature>
<feature type="binding site" evidence="1">
    <location>
        <position position="239"/>
    </location>
    <ligand>
        <name>substrate</name>
    </ligand>
</feature>
<feature type="binding site" evidence="1">
    <location>
        <position position="240"/>
    </location>
    <ligand>
        <name>Ca(2+)</name>
        <dbReference type="ChEBI" id="CHEBI:29108"/>
    </ligand>
</feature>
<keyword id="KW-0106">Calcium</keyword>
<keyword id="KW-0326">Glycosidase</keyword>
<keyword id="KW-0378">Hydrolase</keyword>
<keyword id="KW-0479">Metal-binding</keyword>
<reference key="1">
    <citation type="submission" date="2008-02" db="EMBL/GenBank/DDBJ databases">
        <title>Complete sequence of Escherichia coli C str. ATCC 8739.</title>
        <authorList>
            <person name="Copeland A."/>
            <person name="Lucas S."/>
            <person name="Lapidus A."/>
            <person name="Glavina del Rio T."/>
            <person name="Dalin E."/>
            <person name="Tice H."/>
            <person name="Bruce D."/>
            <person name="Goodwin L."/>
            <person name="Pitluck S."/>
            <person name="Kiss H."/>
            <person name="Brettin T."/>
            <person name="Detter J.C."/>
            <person name="Han C."/>
            <person name="Kuske C.R."/>
            <person name="Schmutz J."/>
            <person name="Larimer F."/>
            <person name="Land M."/>
            <person name="Hauser L."/>
            <person name="Kyrpides N."/>
            <person name="Mikhailova N."/>
            <person name="Ingram L."/>
            <person name="Richardson P."/>
        </authorList>
    </citation>
    <scope>NUCLEOTIDE SEQUENCE [LARGE SCALE GENOMIC DNA]</scope>
    <source>
        <strain>ATCC 8739 / DSM 1576 / NBRC 3972 / NCIMB 8545 / WDCM 00012 / Crooks</strain>
    </source>
</reference>
<proteinExistence type="inferred from homology"/>
<accession>B1IYA8</accession>
<gene>
    <name evidence="1" type="primary">rihB</name>
    <name type="ordered locus">EcolC_1486</name>
</gene>
<name>RIHB_ECOLC</name>
<sequence length="313" mass="33766">MEKRKIILDCDPGHDDAIAMMMAAKHPAIDLLGITIVAGNQTLDKTLINGLNVCQKLEINVPVYAGMPQPIMRKQIVADNIHGETGLDGPVFEPLTRQAESTHAVKYIIDTLMASDGDITLVPVGPLSNIAVAMRMQPAILPKIREIVLMGGAYGTGNFTPSAEFNIFADPEAARVVFTSGVPLVMMGLDLTNQTVCTPDVIARMERAGGPAGELFSDIMNFTLKTQFENYGLAGGPVHDATCIGYLINPDGIKTQEMYVEVDVNSGPCYGRTVCDELGVLGKPANTKVGITIDTDWFWGLVEECVRGYIKTH</sequence>
<organism>
    <name type="scientific">Escherichia coli (strain ATCC 8739 / DSM 1576 / NBRC 3972 / NCIMB 8545 / WDCM 00012 / Crooks)</name>
    <dbReference type="NCBI Taxonomy" id="481805"/>
    <lineage>
        <taxon>Bacteria</taxon>
        <taxon>Pseudomonadati</taxon>
        <taxon>Pseudomonadota</taxon>
        <taxon>Gammaproteobacteria</taxon>
        <taxon>Enterobacterales</taxon>
        <taxon>Enterobacteriaceae</taxon>
        <taxon>Escherichia</taxon>
    </lineage>
</organism>
<protein>
    <recommendedName>
        <fullName evidence="1">Pyrimidine-specific ribonucleoside hydrolase RihB</fullName>
        <ecNumber evidence="1">3.2.2.8</ecNumber>
    </recommendedName>
    <alternativeName>
        <fullName evidence="1">Cytidine/uridine-specific hydrolase</fullName>
    </alternativeName>
</protein>
<evidence type="ECO:0000255" key="1">
    <source>
        <dbReference type="HAMAP-Rule" id="MF_01433"/>
    </source>
</evidence>